<feature type="chain" id="PRO_1000124558" description="Isopentenyl-diphosphate Delta-isomerase">
    <location>
        <begin position="1"/>
        <end position="177"/>
    </location>
</feature>
<feature type="domain" description="Nudix hydrolase">
    <location>
        <begin position="26"/>
        <end position="160"/>
    </location>
</feature>
<feature type="active site" evidence="1">
    <location>
        <position position="62"/>
    </location>
</feature>
<feature type="active site" evidence="1">
    <location>
        <position position="110"/>
    </location>
</feature>
<feature type="binding site" evidence="1">
    <location>
        <position position="22"/>
    </location>
    <ligand>
        <name>Mn(2+)</name>
        <dbReference type="ChEBI" id="CHEBI:29035"/>
    </ligand>
</feature>
<feature type="binding site" evidence="1">
    <location>
        <position position="28"/>
    </location>
    <ligand>
        <name>Mn(2+)</name>
        <dbReference type="ChEBI" id="CHEBI:29035"/>
    </ligand>
</feature>
<feature type="binding site" evidence="1">
    <location>
        <position position="64"/>
    </location>
    <ligand>
        <name>Mn(2+)</name>
        <dbReference type="ChEBI" id="CHEBI:29035"/>
    </ligand>
</feature>
<feature type="binding site" evidence="1">
    <location>
        <position position="82"/>
    </location>
    <ligand>
        <name>Mg(2+)</name>
        <dbReference type="ChEBI" id="CHEBI:18420"/>
    </ligand>
</feature>
<feature type="binding site" evidence="1">
    <location>
        <position position="108"/>
    </location>
    <ligand>
        <name>Mn(2+)</name>
        <dbReference type="ChEBI" id="CHEBI:29035"/>
    </ligand>
</feature>
<feature type="binding site" evidence="1">
    <location>
        <position position="110"/>
    </location>
    <ligand>
        <name>Mn(2+)</name>
        <dbReference type="ChEBI" id="CHEBI:29035"/>
    </ligand>
</feature>
<comment type="function">
    <text evidence="1">Catalyzes the 1,3-allylic rearrangement of the homoallylic substrate isopentenyl (IPP) to its highly electrophilic allylic isomer, dimethylallyl diphosphate (DMAPP).</text>
</comment>
<comment type="catalytic activity">
    <reaction evidence="1">
        <text>isopentenyl diphosphate = dimethylallyl diphosphate</text>
        <dbReference type="Rhea" id="RHEA:23284"/>
        <dbReference type="ChEBI" id="CHEBI:57623"/>
        <dbReference type="ChEBI" id="CHEBI:128769"/>
        <dbReference type="EC" id="5.3.3.2"/>
    </reaction>
</comment>
<comment type="cofactor">
    <cofactor evidence="1">
        <name>Mg(2+)</name>
        <dbReference type="ChEBI" id="CHEBI:18420"/>
    </cofactor>
    <text evidence="1">Binds 1 Mg(2+) ion per subunit. The magnesium ion binds only when substrate is bound.</text>
</comment>
<comment type="cofactor">
    <cofactor evidence="1">
        <name>Mn(2+)</name>
        <dbReference type="ChEBI" id="CHEBI:29035"/>
    </cofactor>
    <text evidence="1">Binds 1 Mn(2+) ion per subunit.</text>
</comment>
<comment type="pathway">
    <text evidence="1">Isoprenoid biosynthesis; dimethylallyl diphosphate biosynthesis; dimethylallyl diphosphate from isopentenyl diphosphate: step 1/1.</text>
</comment>
<comment type="pathway">
    <text evidence="1">Porphyrin-containing compound metabolism; chlorophyll biosynthesis.</text>
</comment>
<comment type="subcellular location">
    <subcellularLocation>
        <location evidence="1">Cytoplasm</location>
    </subcellularLocation>
</comment>
<comment type="similarity">
    <text evidence="1">Belongs to the IPP isomerase type 1 family.</text>
</comment>
<reference key="1">
    <citation type="journal article" date="2009" name="J. Bacteriol.">
        <title>Complete genome sequence of Rhodobacter sphaeroides KD131.</title>
        <authorList>
            <person name="Lim S.-K."/>
            <person name="Kim S.J."/>
            <person name="Cha S.H."/>
            <person name="Oh Y.-K."/>
            <person name="Rhee H.-J."/>
            <person name="Kim M.-S."/>
            <person name="Lee J.K."/>
        </authorList>
    </citation>
    <scope>NUCLEOTIDE SEQUENCE [LARGE SCALE GENOMIC DNA]</scope>
    <source>
        <strain>KD131 / KCTC 12085</strain>
    </source>
</reference>
<sequence>MTEMVPAWVEGRLMPVEKLEAHQRGLRHMAISVFVMAGEAVLIQRRAAGKYHTPGLWANTCCTHPRWGEEAADCAVRRLREELGITGLVTVFADRVEYRADVGNGLIEHEVVDIFVAEAPSDLPVNPDPEEVWETRWVDLTDLAREVKEHPERFTPWLRIYLAEHMERIFGKLRVVQ</sequence>
<proteinExistence type="inferred from homology"/>
<keyword id="KW-0149">Chlorophyll biosynthesis</keyword>
<keyword id="KW-0963">Cytoplasm</keyword>
<keyword id="KW-0413">Isomerase</keyword>
<keyword id="KW-0414">Isoprene biosynthesis</keyword>
<keyword id="KW-0460">Magnesium</keyword>
<keyword id="KW-0464">Manganese</keyword>
<keyword id="KW-0479">Metal-binding</keyword>
<keyword id="KW-0602">Photosynthesis</keyword>
<dbReference type="EC" id="5.3.3.2" evidence="1"/>
<dbReference type="EMBL" id="CP001150">
    <property type="protein sequence ID" value="ACM01462.1"/>
    <property type="molecule type" value="Genomic_DNA"/>
</dbReference>
<dbReference type="RefSeq" id="WP_015920849.1">
    <property type="nucleotide sequence ID" value="NC_011963.1"/>
</dbReference>
<dbReference type="SMR" id="B9KK15"/>
<dbReference type="GeneID" id="67447009"/>
<dbReference type="KEGG" id="rsk:RSKD131_1602"/>
<dbReference type="HOGENOM" id="CLU_060552_2_1_5"/>
<dbReference type="UniPathway" id="UPA00059">
    <property type="reaction ID" value="UER00104"/>
</dbReference>
<dbReference type="UniPathway" id="UPA00668"/>
<dbReference type="GO" id="GO:0005737">
    <property type="term" value="C:cytoplasm"/>
    <property type="evidence" value="ECO:0007669"/>
    <property type="project" value="UniProtKB-SubCell"/>
</dbReference>
<dbReference type="GO" id="GO:0004452">
    <property type="term" value="F:isopentenyl-diphosphate delta-isomerase activity"/>
    <property type="evidence" value="ECO:0007669"/>
    <property type="project" value="UniProtKB-UniRule"/>
</dbReference>
<dbReference type="GO" id="GO:0046872">
    <property type="term" value="F:metal ion binding"/>
    <property type="evidence" value="ECO:0007669"/>
    <property type="project" value="UniProtKB-KW"/>
</dbReference>
<dbReference type="GO" id="GO:0015995">
    <property type="term" value="P:chlorophyll biosynthetic process"/>
    <property type="evidence" value="ECO:0007669"/>
    <property type="project" value="UniProtKB-UniRule"/>
</dbReference>
<dbReference type="GO" id="GO:0050992">
    <property type="term" value="P:dimethylallyl diphosphate biosynthetic process"/>
    <property type="evidence" value="ECO:0007669"/>
    <property type="project" value="UniProtKB-UniRule"/>
</dbReference>
<dbReference type="GO" id="GO:0009240">
    <property type="term" value="P:isopentenyl diphosphate biosynthetic process"/>
    <property type="evidence" value="ECO:0007669"/>
    <property type="project" value="TreeGrafter"/>
</dbReference>
<dbReference type="GO" id="GO:0015979">
    <property type="term" value="P:photosynthesis"/>
    <property type="evidence" value="ECO:0007669"/>
    <property type="project" value="UniProtKB-UniRule"/>
</dbReference>
<dbReference type="CDD" id="cd02885">
    <property type="entry name" value="NUDIX_IPP_Isomerase"/>
    <property type="match status" value="1"/>
</dbReference>
<dbReference type="Gene3D" id="3.90.79.10">
    <property type="entry name" value="Nucleoside Triphosphate Pyrophosphohydrolase"/>
    <property type="match status" value="1"/>
</dbReference>
<dbReference type="HAMAP" id="MF_00202">
    <property type="entry name" value="Idi"/>
    <property type="match status" value="1"/>
</dbReference>
<dbReference type="InterPro" id="IPR056375">
    <property type="entry name" value="Idi_bact"/>
</dbReference>
<dbReference type="InterPro" id="IPR011876">
    <property type="entry name" value="IsopentenylPP_isomerase_typ1"/>
</dbReference>
<dbReference type="InterPro" id="IPR015797">
    <property type="entry name" value="NUDIX_hydrolase-like_dom_sf"/>
</dbReference>
<dbReference type="InterPro" id="IPR000086">
    <property type="entry name" value="NUDIX_hydrolase_dom"/>
</dbReference>
<dbReference type="NCBIfam" id="TIGR02150">
    <property type="entry name" value="IPP_isom_1"/>
    <property type="match status" value="1"/>
</dbReference>
<dbReference type="NCBIfam" id="NF002995">
    <property type="entry name" value="PRK03759.1"/>
    <property type="match status" value="1"/>
</dbReference>
<dbReference type="PANTHER" id="PTHR10885">
    <property type="entry name" value="ISOPENTENYL-DIPHOSPHATE DELTA-ISOMERASE"/>
    <property type="match status" value="1"/>
</dbReference>
<dbReference type="PANTHER" id="PTHR10885:SF0">
    <property type="entry name" value="ISOPENTENYL-DIPHOSPHATE DELTA-ISOMERASE"/>
    <property type="match status" value="1"/>
</dbReference>
<dbReference type="Pfam" id="PF00293">
    <property type="entry name" value="NUDIX"/>
    <property type="match status" value="1"/>
</dbReference>
<dbReference type="PIRSF" id="PIRSF018427">
    <property type="entry name" value="Isopntndiph_ism"/>
    <property type="match status" value="1"/>
</dbReference>
<dbReference type="SUPFAM" id="SSF55811">
    <property type="entry name" value="Nudix"/>
    <property type="match status" value="1"/>
</dbReference>
<dbReference type="PROSITE" id="PS51462">
    <property type="entry name" value="NUDIX"/>
    <property type="match status" value="1"/>
</dbReference>
<protein>
    <recommendedName>
        <fullName evidence="1">Isopentenyl-diphosphate Delta-isomerase</fullName>
        <shortName evidence="1">IPP isomerase</shortName>
        <ecNumber evidence="1">5.3.3.2</ecNumber>
    </recommendedName>
    <alternativeName>
        <fullName evidence="1">IPP:DMAPP isomerase</fullName>
    </alternativeName>
    <alternativeName>
        <fullName evidence="1">Isopentenyl pyrophosphate isomerase</fullName>
    </alternativeName>
</protein>
<accession>B9KK15</accession>
<organism>
    <name type="scientific">Cereibacter sphaeroides (strain KD131 / KCTC 12085)</name>
    <name type="common">Rhodobacter sphaeroides</name>
    <dbReference type="NCBI Taxonomy" id="557760"/>
    <lineage>
        <taxon>Bacteria</taxon>
        <taxon>Pseudomonadati</taxon>
        <taxon>Pseudomonadota</taxon>
        <taxon>Alphaproteobacteria</taxon>
        <taxon>Rhodobacterales</taxon>
        <taxon>Paracoccaceae</taxon>
        <taxon>Cereibacter</taxon>
    </lineage>
</organism>
<gene>
    <name evidence="1" type="primary">idi</name>
    <name type="ordered locus">RSKD131_1602</name>
</gene>
<evidence type="ECO:0000255" key="1">
    <source>
        <dbReference type="HAMAP-Rule" id="MF_00202"/>
    </source>
</evidence>
<name>IDI_CERSK</name>